<name>RS20_NITWN</name>
<dbReference type="EMBL" id="CP000115">
    <property type="protein sequence ID" value="ABA06390.1"/>
    <property type="molecule type" value="Genomic_DNA"/>
</dbReference>
<dbReference type="RefSeq" id="WP_011316298.1">
    <property type="nucleotide sequence ID" value="NC_007406.1"/>
</dbReference>
<dbReference type="SMR" id="Q3SMV1"/>
<dbReference type="STRING" id="323098.Nwi_3143"/>
<dbReference type="KEGG" id="nwi:Nwi_3143"/>
<dbReference type="eggNOG" id="COG0268">
    <property type="taxonomic scope" value="Bacteria"/>
</dbReference>
<dbReference type="HOGENOM" id="CLU_160655_3_0_5"/>
<dbReference type="OrthoDB" id="9807974at2"/>
<dbReference type="Proteomes" id="UP000002531">
    <property type="component" value="Chromosome"/>
</dbReference>
<dbReference type="GO" id="GO:0005829">
    <property type="term" value="C:cytosol"/>
    <property type="evidence" value="ECO:0007669"/>
    <property type="project" value="TreeGrafter"/>
</dbReference>
<dbReference type="GO" id="GO:0015935">
    <property type="term" value="C:small ribosomal subunit"/>
    <property type="evidence" value="ECO:0007669"/>
    <property type="project" value="TreeGrafter"/>
</dbReference>
<dbReference type="GO" id="GO:0070181">
    <property type="term" value="F:small ribosomal subunit rRNA binding"/>
    <property type="evidence" value="ECO:0007669"/>
    <property type="project" value="TreeGrafter"/>
</dbReference>
<dbReference type="GO" id="GO:0003735">
    <property type="term" value="F:structural constituent of ribosome"/>
    <property type="evidence" value="ECO:0007669"/>
    <property type="project" value="InterPro"/>
</dbReference>
<dbReference type="GO" id="GO:0006412">
    <property type="term" value="P:translation"/>
    <property type="evidence" value="ECO:0007669"/>
    <property type="project" value="UniProtKB-UniRule"/>
</dbReference>
<dbReference type="Gene3D" id="1.20.58.110">
    <property type="entry name" value="Ribosomal protein S20"/>
    <property type="match status" value="1"/>
</dbReference>
<dbReference type="HAMAP" id="MF_00500">
    <property type="entry name" value="Ribosomal_bS20"/>
    <property type="match status" value="1"/>
</dbReference>
<dbReference type="InterPro" id="IPR002583">
    <property type="entry name" value="Ribosomal_bS20"/>
</dbReference>
<dbReference type="InterPro" id="IPR036510">
    <property type="entry name" value="Ribosomal_bS20_sf"/>
</dbReference>
<dbReference type="NCBIfam" id="TIGR00029">
    <property type="entry name" value="S20"/>
    <property type="match status" value="1"/>
</dbReference>
<dbReference type="PANTHER" id="PTHR33398">
    <property type="entry name" value="30S RIBOSOMAL PROTEIN S20"/>
    <property type="match status" value="1"/>
</dbReference>
<dbReference type="PANTHER" id="PTHR33398:SF1">
    <property type="entry name" value="SMALL RIBOSOMAL SUBUNIT PROTEIN BS20C"/>
    <property type="match status" value="1"/>
</dbReference>
<dbReference type="Pfam" id="PF01649">
    <property type="entry name" value="Ribosomal_S20p"/>
    <property type="match status" value="1"/>
</dbReference>
<dbReference type="SUPFAM" id="SSF46992">
    <property type="entry name" value="Ribosomal protein S20"/>
    <property type="match status" value="1"/>
</dbReference>
<comment type="function">
    <text evidence="1">Binds directly to 16S ribosomal RNA.</text>
</comment>
<comment type="similarity">
    <text evidence="1">Belongs to the bacterial ribosomal protein bS20 family.</text>
</comment>
<proteinExistence type="inferred from homology"/>
<accession>Q3SMV1</accession>
<protein>
    <recommendedName>
        <fullName evidence="1">Small ribosomal subunit protein bS20</fullName>
    </recommendedName>
    <alternativeName>
        <fullName evidence="2">30S ribosomal protein S20</fullName>
    </alternativeName>
</protein>
<keyword id="KW-1185">Reference proteome</keyword>
<keyword id="KW-0687">Ribonucleoprotein</keyword>
<keyword id="KW-0689">Ribosomal protein</keyword>
<keyword id="KW-0694">RNA-binding</keyword>
<keyword id="KW-0699">rRNA-binding</keyword>
<sequence>MANTTSAKKATRKIARRTAINRSRRTLMRGTVRIVEEAIAKGDRDAAIQAMKRAEPELMRAGQQNIIHKNNASRKVSRLTHRIAKLAQ</sequence>
<feature type="chain" id="PRO_0000224974" description="Small ribosomal subunit protein bS20">
    <location>
        <begin position="1"/>
        <end position="88"/>
    </location>
</feature>
<evidence type="ECO:0000255" key="1">
    <source>
        <dbReference type="HAMAP-Rule" id="MF_00500"/>
    </source>
</evidence>
<evidence type="ECO:0000305" key="2"/>
<organism>
    <name type="scientific">Nitrobacter winogradskyi (strain ATCC 25391 / DSM 10237 / CIP 104748 / NCIMB 11846 / Nb-255)</name>
    <dbReference type="NCBI Taxonomy" id="323098"/>
    <lineage>
        <taxon>Bacteria</taxon>
        <taxon>Pseudomonadati</taxon>
        <taxon>Pseudomonadota</taxon>
        <taxon>Alphaproteobacteria</taxon>
        <taxon>Hyphomicrobiales</taxon>
        <taxon>Nitrobacteraceae</taxon>
        <taxon>Nitrobacter</taxon>
    </lineage>
</organism>
<gene>
    <name evidence="1" type="primary">rpsT</name>
    <name type="ordered locus">Nwi_3143</name>
</gene>
<reference key="1">
    <citation type="journal article" date="2006" name="Appl. Environ. Microbiol.">
        <title>Genome sequence of the chemolithoautotrophic nitrite-oxidizing bacterium Nitrobacter winogradskyi Nb-255.</title>
        <authorList>
            <person name="Starkenburg S.R."/>
            <person name="Chain P.S.G."/>
            <person name="Sayavedra-Soto L.A."/>
            <person name="Hauser L."/>
            <person name="Land M.L."/>
            <person name="Larimer F.W."/>
            <person name="Malfatti S.A."/>
            <person name="Klotz M.G."/>
            <person name="Bottomley P.J."/>
            <person name="Arp D.J."/>
            <person name="Hickey W.J."/>
        </authorList>
    </citation>
    <scope>NUCLEOTIDE SEQUENCE [LARGE SCALE GENOMIC DNA]</scope>
    <source>
        <strain>ATCC 25391 / DSM 10237 / CIP 104748 / NCIMB 11846 / Nb-255</strain>
    </source>
</reference>